<dbReference type="EMBL" id="CR861049">
    <property type="protein sequence ID" value="CAH93137.1"/>
    <property type="molecule type" value="mRNA"/>
</dbReference>
<dbReference type="EMBL" id="CR926078">
    <property type="protein sequence ID" value="CAI29705.1"/>
    <property type="molecule type" value="mRNA"/>
</dbReference>
<dbReference type="RefSeq" id="NP_001127112.1">
    <property type="nucleotide sequence ID" value="NM_001133640.1"/>
</dbReference>
<dbReference type="BMRB" id="Q5R529"/>
<dbReference type="SMR" id="Q5R529"/>
<dbReference type="FunCoup" id="Q5R529">
    <property type="interactions" value="1405"/>
</dbReference>
<dbReference type="STRING" id="9601.ENSPPYP00000000745"/>
<dbReference type="Ensembl" id="ENSPPYT00000000774.3">
    <property type="protein sequence ID" value="ENSPPYP00000000745.2"/>
    <property type="gene ID" value="ENSPPYG00000000638.3"/>
</dbReference>
<dbReference type="GeneID" id="100174153"/>
<dbReference type="KEGG" id="pon:100174153"/>
<dbReference type="CTD" id="8682"/>
<dbReference type="eggNOG" id="KOG3573">
    <property type="taxonomic scope" value="Eukaryota"/>
</dbReference>
<dbReference type="GeneTree" id="ENSGT00390000000230"/>
<dbReference type="HOGENOM" id="CLU_159419_0_0_1"/>
<dbReference type="InParanoid" id="Q5R529"/>
<dbReference type="OrthoDB" id="9931131at2759"/>
<dbReference type="TreeFam" id="TF332405"/>
<dbReference type="Proteomes" id="UP000001595">
    <property type="component" value="Chromosome 1"/>
</dbReference>
<dbReference type="GO" id="GO:0005737">
    <property type="term" value="C:cytoplasm"/>
    <property type="evidence" value="ECO:0007669"/>
    <property type="project" value="UniProtKB-SubCell"/>
</dbReference>
<dbReference type="GO" id="GO:0006915">
    <property type="term" value="P:apoptotic process"/>
    <property type="evidence" value="ECO:0007669"/>
    <property type="project" value="UniProtKB-KW"/>
</dbReference>
<dbReference type="GO" id="GO:0000165">
    <property type="term" value="P:MAPK cascade"/>
    <property type="evidence" value="ECO:0007669"/>
    <property type="project" value="InterPro"/>
</dbReference>
<dbReference type="GO" id="GO:1902042">
    <property type="term" value="P:negative regulation of extrinsic apoptotic signaling pathway via death domain receptors"/>
    <property type="evidence" value="ECO:0007669"/>
    <property type="project" value="TreeGrafter"/>
</dbReference>
<dbReference type="CDD" id="cd08338">
    <property type="entry name" value="DED_PEA15"/>
    <property type="match status" value="1"/>
</dbReference>
<dbReference type="FunFam" id="1.10.533.10:FF:000026">
    <property type="entry name" value="astrocytic phosphoprotein PEA-15 isoform X1"/>
    <property type="match status" value="1"/>
</dbReference>
<dbReference type="Gene3D" id="1.10.533.10">
    <property type="entry name" value="Death Domain, Fas"/>
    <property type="match status" value="1"/>
</dbReference>
<dbReference type="InterPro" id="IPR011029">
    <property type="entry name" value="DEATH-like_dom_sf"/>
</dbReference>
<dbReference type="InterPro" id="IPR001875">
    <property type="entry name" value="DED_dom"/>
</dbReference>
<dbReference type="InterPro" id="IPR029546">
    <property type="entry name" value="PEA15_DED"/>
</dbReference>
<dbReference type="PANTHER" id="PTHR48169:SF1">
    <property type="entry name" value="ASTROCYTIC PHOSPHOPROTEIN PEA-15"/>
    <property type="match status" value="1"/>
</dbReference>
<dbReference type="PANTHER" id="PTHR48169">
    <property type="entry name" value="DED DOMAIN-CONTAINING PROTEIN"/>
    <property type="match status" value="1"/>
</dbReference>
<dbReference type="Pfam" id="PF01335">
    <property type="entry name" value="DED"/>
    <property type="match status" value="1"/>
</dbReference>
<dbReference type="SMART" id="SM00031">
    <property type="entry name" value="DED"/>
    <property type="match status" value="1"/>
</dbReference>
<dbReference type="SUPFAM" id="SSF47986">
    <property type="entry name" value="DEATH domain"/>
    <property type="match status" value="1"/>
</dbReference>
<dbReference type="PROSITE" id="PS50168">
    <property type="entry name" value="DED"/>
    <property type="match status" value="1"/>
</dbReference>
<evidence type="ECO:0000250" key="1"/>
<evidence type="ECO:0000250" key="2">
    <source>
        <dbReference type="UniProtKB" id="Q15121"/>
    </source>
</evidence>
<evidence type="ECO:0000250" key="3">
    <source>
        <dbReference type="UniProtKB" id="Q62048"/>
    </source>
</evidence>
<evidence type="ECO:0000255" key="4"/>
<evidence type="ECO:0000255" key="5">
    <source>
        <dbReference type="PROSITE-ProRule" id="PRU00065"/>
    </source>
</evidence>
<feature type="chain" id="PRO_0000252681" description="Astrocytic phosphoprotein PEA-15">
    <location>
        <begin position="1"/>
        <end position="130"/>
    </location>
</feature>
<feature type="domain" description="DED" evidence="5">
    <location>
        <begin position="3"/>
        <end position="81"/>
    </location>
</feature>
<feature type="region of interest" description="Microtubule-binding" evidence="4">
    <location>
        <begin position="98"/>
        <end position="107"/>
    </location>
</feature>
<feature type="region of interest" description="Microtubule-binding" evidence="4">
    <location>
        <begin position="122"/>
        <end position="129"/>
    </location>
</feature>
<feature type="modified residue" description="Phosphoserine" evidence="2">
    <location>
        <position position="61"/>
    </location>
</feature>
<feature type="modified residue" description="Phosphoserine" evidence="3">
    <location>
        <position position="90"/>
    </location>
</feature>
<feature type="modified residue" description="Phosphoserine; by PKC" evidence="3">
    <location>
        <position position="104"/>
    </location>
</feature>
<feature type="modified residue" description="Phosphoserine; by CaMK2" evidence="3">
    <location>
        <position position="116"/>
    </location>
</feature>
<protein>
    <recommendedName>
        <fullName>Astrocytic phosphoprotein PEA-15</fullName>
    </recommendedName>
    <alternativeName>
        <fullName>15 kDa phosphoprotein enriched in astrocytes</fullName>
    </alternativeName>
</protein>
<gene>
    <name type="primary">PEA15</name>
</gene>
<reference key="1">
    <citation type="submission" date="2004-11" db="EMBL/GenBank/DDBJ databases">
        <authorList>
            <consortium name="The German cDNA consortium"/>
        </authorList>
    </citation>
    <scope>NUCLEOTIDE SEQUENCE [LARGE SCALE MRNA]</scope>
    <source>
        <tissue>Brain cortex</tissue>
    </source>
</reference>
<proteinExistence type="evidence at transcript level"/>
<keyword id="KW-0053">Apoptosis</keyword>
<keyword id="KW-0963">Cytoplasm</keyword>
<keyword id="KW-0597">Phosphoprotein</keyword>
<keyword id="KW-1185">Reference proteome</keyword>
<keyword id="KW-0762">Sugar transport</keyword>
<keyword id="KW-0813">Transport</keyword>
<accession>Q5R529</accession>
<sequence length="130" mass="15040">MAEYGTLLQDLTNNITLEDLEQLKSACKEDIPSEKSEEITTGSAWFSFLESHNKLDKDNLSYIEHIFEISRRPDLLTMVVDYRTRVLKISEEDELDTKLTRIPSAKKYKDIIRQPSEEEIIKLAPPPKKA</sequence>
<name>PEA15_PONAB</name>
<organism>
    <name type="scientific">Pongo abelii</name>
    <name type="common">Sumatran orangutan</name>
    <name type="synonym">Pongo pygmaeus abelii</name>
    <dbReference type="NCBI Taxonomy" id="9601"/>
    <lineage>
        <taxon>Eukaryota</taxon>
        <taxon>Metazoa</taxon>
        <taxon>Chordata</taxon>
        <taxon>Craniata</taxon>
        <taxon>Vertebrata</taxon>
        <taxon>Euteleostomi</taxon>
        <taxon>Mammalia</taxon>
        <taxon>Eutheria</taxon>
        <taxon>Euarchontoglires</taxon>
        <taxon>Primates</taxon>
        <taxon>Haplorrhini</taxon>
        <taxon>Catarrhini</taxon>
        <taxon>Hominidae</taxon>
        <taxon>Pongo</taxon>
    </lineage>
</organism>
<comment type="function">
    <text evidence="1">Blocks Ras-mediated inhibition of integrin activation and modulates the ERK MAP kinase cascade. Inhibits RPS6KA3 activities by retaining it in the cytoplasm. Inhibits both TNFRSF6- and TNFRSF1A-mediated CASP8 activity and apoptosis. Regulates glucose transport by controlling both the content of SLC2A1 glucose transporters on the plasma membrane and the insulin-dependent trafficking of SLC2A4 from the cell interior to the surface (By similarity).</text>
</comment>
<comment type="subunit">
    <text evidence="1">Binds RPS6KA3, MAPK3 and MAPK1. Interacts with CASP8 and FADD. Transient interaction with PLD1 and PLD2 (By similarity).</text>
</comment>
<comment type="subcellular location">
    <subcellularLocation>
        <location>Cytoplasm</location>
    </subcellularLocation>
    <text evidence="1">Associated with microtubules.</text>
</comment>
<comment type="PTM">
    <text evidence="1">Phosphorylated by protein kinase C and calcium-calmodulin-dependent protein kinase. These phosphorylation events are modulated by neurotransmitters or hormones (By similarity).</text>
</comment>